<organism>
    <name type="scientific">Polaromonas sp. (strain JS666 / ATCC BAA-500)</name>
    <dbReference type="NCBI Taxonomy" id="296591"/>
    <lineage>
        <taxon>Bacteria</taxon>
        <taxon>Pseudomonadati</taxon>
        <taxon>Pseudomonadota</taxon>
        <taxon>Betaproteobacteria</taxon>
        <taxon>Burkholderiales</taxon>
        <taxon>Comamonadaceae</taxon>
        <taxon>Polaromonas</taxon>
    </lineage>
</organism>
<proteinExistence type="inferred from homology"/>
<gene>
    <name evidence="1" type="primary">purA</name>
    <name type="ordered locus">Bpro_2597</name>
</gene>
<sequence length="446" mass="48270">MTYKPTVAAGRNVVVVGTQWGDEGKGKLVDWLTEMSQGVVRFQGGHNAGHTLVINGIKTALHLIPSGIMRPGVKCYIGNGVVLSAAKLFEEIEGLEKAGVEVRSRLRISEACPLILPFHAALDIAREAYREKGGTARIGTTGRGIGPAYEDKIARRALRVQDLKYPERFAAKLRELLDLHNFVLTGYLHAPAIDFDTVYAEAMRHAELLKPMMADVSRELNDANREGANLLFEGAQGTLLDVDHGTYPYVTSSNCVAGNAAAGAGVGPGMLHYILGITKAYCTRVGGGPFPTELDWETPDTVGYHLSTVGAEKGVTTGRSRRCGWFDAALLKRSAQVNGLSGLCITKLDVLDGIAELKLCTGYELDGHITDILPMGAEDIERCKPIYETLPGWSQSTVGVTQYDQLPAAAQKYLHRIEEVTGVPIDMISTSPDRDHTILLRNPYAA</sequence>
<reference key="1">
    <citation type="journal article" date="2008" name="Appl. Environ. Microbiol.">
        <title>The genome of Polaromonas sp. strain JS666: insights into the evolution of a hydrocarbon- and xenobiotic-degrading bacterium, and features of relevance to biotechnology.</title>
        <authorList>
            <person name="Mattes T.E."/>
            <person name="Alexander A.K."/>
            <person name="Richardson P.M."/>
            <person name="Munk A.C."/>
            <person name="Han C.S."/>
            <person name="Stothard P."/>
            <person name="Coleman N.V."/>
        </authorList>
    </citation>
    <scope>NUCLEOTIDE SEQUENCE [LARGE SCALE GENOMIC DNA]</scope>
    <source>
        <strain>JS666 / ATCC BAA-500</strain>
    </source>
</reference>
<name>PURA_POLSJ</name>
<evidence type="ECO:0000255" key="1">
    <source>
        <dbReference type="HAMAP-Rule" id="MF_00011"/>
    </source>
</evidence>
<keyword id="KW-0963">Cytoplasm</keyword>
<keyword id="KW-0342">GTP-binding</keyword>
<keyword id="KW-0436">Ligase</keyword>
<keyword id="KW-0460">Magnesium</keyword>
<keyword id="KW-0479">Metal-binding</keyword>
<keyword id="KW-0547">Nucleotide-binding</keyword>
<keyword id="KW-0658">Purine biosynthesis</keyword>
<keyword id="KW-1185">Reference proteome</keyword>
<protein>
    <recommendedName>
        <fullName evidence="1">Adenylosuccinate synthetase</fullName>
        <shortName evidence="1">AMPSase</shortName>
        <shortName evidence="1">AdSS</shortName>
        <ecNumber evidence="1">6.3.4.4</ecNumber>
    </recommendedName>
    <alternativeName>
        <fullName evidence="1">IMP--aspartate ligase</fullName>
    </alternativeName>
</protein>
<feature type="chain" id="PRO_0000321805" description="Adenylosuccinate synthetase">
    <location>
        <begin position="1"/>
        <end position="446"/>
    </location>
</feature>
<feature type="active site" description="Proton acceptor" evidence="1">
    <location>
        <position position="22"/>
    </location>
</feature>
<feature type="active site" description="Proton donor" evidence="1">
    <location>
        <position position="50"/>
    </location>
</feature>
<feature type="binding site" evidence="1">
    <location>
        <begin position="21"/>
        <end position="27"/>
    </location>
    <ligand>
        <name>GTP</name>
        <dbReference type="ChEBI" id="CHEBI:37565"/>
    </ligand>
</feature>
<feature type="binding site" description="in other chain" evidence="1">
    <location>
        <begin position="22"/>
        <end position="25"/>
    </location>
    <ligand>
        <name>IMP</name>
        <dbReference type="ChEBI" id="CHEBI:58053"/>
        <note>ligand shared between dimeric partners</note>
    </ligand>
</feature>
<feature type="binding site" evidence="1">
    <location>
        <position position="22"/>
    </location>
    <ligand>
        <name>Mg(2+)</name>
        <dbReference type="ChEBI" id="CHEBI:18420"/>
    </ligand>
</feature>
<feature type="binding site" description="in other chain" evidence="1">
    <location>
        <begin position="47"/>
        <end position="50"/>
    </location>
    <ligand>
        <name>IMP</name>
        <dbReference type="ChEBI" id="CHEBI:58053"/>
        <note>ligand shared between dimeric partners</note>
    </ligand>
</feature>
<feature type="binding site" evidence="1">
    <location>
        <begin position="49"/>
        <end position="51"/>
    </location>
    <ligand>
        <name>GTP</name>
        <dbReference type="ChEBI" id="CHEBI:37565"/>
    </ligand>
</feature>
<feature type="binding site" evidence="1">
    <location>
        <position position="49"/>
    </location>
    <ligand>
        <name>Mg(2+)</name>
        <dbReference type="ChEBI" id="CHEBI:18420"/>
    </ligand>
</feature>
<feature type="binding site" description="in other chain" evidence="1">
    <location>
        <position position="141"/>
    </location>
    <ligand>
        <name>IMP</name>
        <dbReference type="ChEBI" id="CHEBI:58053"/>
        <note>ligand shared between dimeric partners</note>
    </ligand>
</feature>
<feature type="binding site" evidence="1">
    <location>
        <position position="155"/>
    </location>
    <ligand>
        <name>IMP</name>
        <dbReference type="ChEBI" id="CHEBI:58053"/>
        <note>ligand shared between dimeric partners</note>
    </ligand>
</feature>
<feature type="binding site" description="in other chain" evidence="1">
    <location>
        <position position="236"/>
    </location>
    <ligand>
        <name>IMP</name>
        <dbReference type="ChEBI" id="CHEBI:58053"/>
        <note>ligand shared between dimeric partners</note>
    </ligand>
</feature>
<feature type="binding site" description="in other chain" evidence="1">
    <location>
        <position position="251"/>
    </location>
    <ligand>
        <name>IMP</name>
        <dbReference type="ChEBI" id="CHEBI:58053"/>
        <note>ligand shared between dimeric partners</note>
    </ligand>
</feature>
<feature type="binding site" evidence="1">
    <location>
        <begin position="315"/>
        <end position="321"/>
    </location>
    <ligand>
        <name>substrate</name>
    </ligand>
</feature>
<feature type="binding site" description="in other chain" evidence="1">
    <location>
        <position position="319"/>
    </location>
    <ligand>
        <name>IMP</name>
        <dbReference type="ChEBI" id="CHEBI:58053"/>
        <note>ligand shared between dimeric partners</note>
    </ligand>
</feature>
<feature type="binding site" evidence="1">
    <location>
        <position position="321"/>
    </location>
    <ligand>
        <name>GTP</name>
        <dbReference type="ChEBI" id="CHEBI:37565"/>
    </ligand>
</feature>
<feature type="binding site" evidence="1">
    <location>
        <begin position="347"/>
        <end position="349"/>
    </location>
    <ligand>
        <name>GTP</name>
        <dbReference type="ChEBI" id="CHEBI:37565"/>
    </ligand>
</feature>
<feature type="binding site" evidence="1">
    <location>
        <begin position="429"/>
        <end position="431"/>
    </location>
    <ligand>
        <name>GTP</name>
        <dbReference type="ChEBI" id="CHEBI:37565"/>
    </ligand>
</feature>
<dbReference type="EC" id="6.3.4.4" evidence="1"/>
<dbReference type="EMBL" id="CP000316">
    <property type="protein sequence ID" value="ABE44513.1"/>
    <property type="molecule type" value="Genomic_DNA"/>
</dbReference>
<dbReference type="RefSeq" id="WP_011483511.1">
    <property type="nucleotide sequence ID" value="NC_007948.1"/>
</dbReference>
<dbReference type="SMR" id="Q12AC9"/>
<dbReference type="STRING" id="296591.Bpro_2597"/>
<dbReference type="KEGG" id="pol:Bpro_2597"/>
<dbReference type="eggNOG" id="COG0104">
    <property type="taxonomic scope" value="Bacteria"/>
</dbReference>
<dbReference type="HOGENOM" id="CLU_029848_0_0_4"/>
<dbReference type="OrthoDB" id="9807553at2"/>
<dbReference type="UniPathway" id="UPA00075">
    <property type="reaction ID" value="UER00335"/>
</dbReference>
<dbReference type="Proteomes" id="UP000001983">
    <property type="component" value="Chromosome"/>
</dbReference>
<dbReference type="GO" id="GO:0005737">
    <property type="term" value="C:cytoplasm"/>
    <property type="evidence" value="ECO:0007669"/>
    <property type="project" value="UniProtKB-SubCell"/>
</dbReference>
<dbReference type="GO" id="GO:0004019">
    <property type="term" value="F:adenylosuccinate synthase activity"/>
    <property type="evidence" value="ECO:0007669"/>
    <property type="project" value="UniProtKB-UniRule"/>
</dbReference>
<dbReference type="GO" id="GO:0005525">
    <property type="term" value="F:GTP binding"/>
    <property type="evidence" value="ECO:0007669"/>
    <property type="project" value="UniProtKB-UniRule"/>
</dbReference>
<dbReference type="GO" id="GO:0000287">
    <property type="term" value="F:magnesium ion binding"/>
    <property type="evidence" value="ECO:0007669"/>
    <property type="project" value="UniProtKB-UniRule"/>
</dbReference>
<dbReference type="GO" id="GO:0044208">
    <property type="term" value="P:'de novo' AMP biosynthetic process"/>
    <property type="evidence" value="ECO:0007669"/>
    <property type="project" value="UniProtKB-UniRule"/>
</dbReference>
<dbReference type="GO" id="GO:0046040">
    <property type="term" value="P:IMP metabolic process"/>
    <property type="evidence" value="ECO:0007669"/>
    <property type="project" value="TreeGrafter"/>
</dbReference>
<dbReference type="CDD" id="cd03108">
    <property type="entry name" value="AdSS"/>
    <property type="match status" value="1"/>
</dbReference>
<dbReference type="FunFam" id="1.10.300.10:FF:000001">
    <property type="entry name" value="Adenylosuccinate synthetase"/>
    <property type="match status" value="1"/>
</dbReference>
<dbReference type="FunFam" id="3.90.170.10:FF:000001">
    <property type="entry name" value="Adenylosuccinate synthetase"/>
    <property type="match status" value="1"/>
</dbReference>
<dbReference type="Gene3D" id="3.40.440.10">
    <property type="entry name" value="Adenylosuccinate Synthetase, subunit A, domain 1"/>
    <property type="match status" value="1"/>
</dbReference>
<dbReference type="Gene3D" id="1.10.300.10">
    <property type="entry name" value="Adenylosuccinate Synthetase, subunit A, domain 2"/>
    <property type="match status" value="1"/>
</dbReference>
<dbReference type="Gene3D" id="3.90.170.10">
    <property type="entry name" value="Adenylosuccinate Synthetase, subunit A, domain 3"/>
    <property type="match status" value="1"/>
</dbReference>
<dbReference type="HAMAP" id="MF_00011">
    <property type="entry name" value="Adenylosucc_synth"/>
    <property type="match status" value="1"/>
</dbReference>
<dbReference type="InterPro" id="IPR018220">
    <property type="entry name" value="Adenylosuccin_syn_GTP-bd"/>
</dbReference>
<dbReference type="InterPro" id="IPR033128">
    <property type="entry name" value="Adenylosuccin_syn_Lys_AS"/>
</dbReference>
<dbReference type="InterPro" id="IPR042109">
    <property type="entry name" value="Adenylosuccinate_synth_dom1"/>
</dbReference>
<dbReference type="InterPro" id="IPR042110">
    <property type="entry name" value="Adenylosuccinate_synth_dom2"/>
</dbReference>
<dbReference type="InterPro" id="IPR042111">
    <property type="entry name" value="Adenylosuccinate_synth_dom3"/>
</dbReference>
<dbReference type="InterPro" id="IPR001114">
    <property type="entry name" value="Adenylosuccinate_synthetase"/>
</dbReference>
<dbReference type="InterPro" id="IPR027417">
    <property type="entry name" value="P-loop_NTPase"/>
</dbReference>
<dbReference type="NCBIfam" id="NF002223">
    <property type="entry name" value="PRK01117.1"/>
    <property type="match status" value="1"/>
</dbReference>
<dbReference type="NCBIfam" id="TIGR00184">
    <property type="entry name" value="purA"/>
    <property type="match status" value="1"/>
</dbReference>
<dbReference type="PANTHER" id="PTHR11846">
    <property type="entry name" value="ADENYLOSUCCINATE SYNTHETASE"/>
    <property type="match status" value="1"/>
</dbReference>
<dbReference type="PANTHER" id="PTHR11846:SF0">
    <property type="entry name" value="ADENYLOSUCCINATE SYNTHETASE"/>
    <property type="match status" value="1"/>
</dbReference>
<dbReference type="Pfam" id="PF00709">
    <property type="entry name" value="Adenylsucc_synt"/>
    <property type="match status" value="1"/>
</dbReference>
<dbReference type="SMART" id="SM00788">
    <property type="entry name" value="Adenylsucc_synt"/>
    <property type="match status" value="1"/>
</dbReference>
<dbReference type="SUPFAM" id="SSF52540">
    <property type="entry name" value="P-loop containing nucleoside triphosphate hydrolases"/>
    <property type="match status" value="1"/>
</dbReference>
<dbReference type="PROSITE" id="PS01266">
    <property type="entry name" value="ADENYLOSUCCIN_SYN_1"/>
    <property type="match status" value="1"/>
</dbReference>
<dbReference type="PROSITE" id="PS00513">
    <property type="entry name" value="ADENYLOSUCCIN_SYN_2"/>
    <property type="match status" value="1"/>
</dbReference>
<accession>Q12AC9</accession>
<comment type="function">
    <text evidence="1">Plays an important role in the de novo pathway of purine nucleotide biosynthesis. Catalyzes the first committed step in the biosynthesis of AMP from IMP.</text>
</comment>
<comment type="catalytic activity">
    <reaction evidence="1">
        <text>IMP + L-aspartate + GTP = N(6)-(1,2-dicarboxyethyl)-AMP + GDP + phosphate + 2 H(+)</text>
        <dbReference type="Rhea" id="RHEA:15753"/>
        <dbReference type="ChEBI" id="CHEBI:15378"/>
        <dbReference type="ChEBI" id="CHEBI:29991"/>
        <dbReference type="ChEBI" id="CHEBI:37565"/>
        <dbReference type="ChEBI" id="CHEBI:43474"/>
        <dbReference type="ChEBI" id="CHEBI:57567"/>
        <dbReference type="ChEBI" id="CHEBI:58053"/>
        <dbReference type="ChEBI" id="CHEBI:58189"/>
        <dbReference type="EC" id="6.3.4.4"/>
    </reaction>
</comment>
<comment type="cofactor">
    <cofactor evidence="1">
        <name>Mg(2+)</name>
        <dbReference type="ChEBI" id="CHEBI:18420"/>
    </cofactor>
    <text evidence="1">Binds 1 Mg(2+) ion per subunit.</text>
</comment>
<comment type="pathway">
    <text evidence="1">Purine metabolism; AMP biosynthesis via de novo pathway; AMP from IMP: step 1/2.</text>
</comment>
<comment type="subunit">
    <text evidence="1">Homodimer.</text>
</comment>
<comment type="subcellular location">
    <subcellularLocation>
        <location evidence="1">Cytoplasm</location>
    </subcellularLocation>
</comment>
<comment type="similarity">
    <text evidence="1">Belongs to the adenylosuccinate synthetase family.</text>
</comment>